<gene>
    <name evidence="1" type="primary">ilvD</name>
    <name type="ordered locus">HEAR0734</name>
</gene>
<organism>
    <name type="scientific">Herminiimonas arsenicoxydans</name>
    <dbReference type="NCBI Taxonomy" id="204773"/>
    <lineage>
        <taxon>Bacteria</taxon>
        <taxon>Pseudomonadati</taxon>
        <taxon>Pseudomonadota</taxon>
        <taxon>Betaproteobacteria</taxon>
        <taxon>Burkholderiales</taxon>
        <taxon>Oxalobacteraceae</taxon>
        <taxon>Herminiimonas</taxon>
    </lineage>
</organism>
<sequence>MAFNRRSKNITQGVSRSPNRSMYYAMGYEKADFDKPMVGIANGHSTITPCNSGLQKLADIAIKTIKDAGGNPQVFGTPTISDGMSMGTEGMKYSLISREVIADCIETAVNGQWMDGVLVIGGCDKNMPGGMIAMLRTNVPSIYVYGGTIKPGHWKGKDLTIVSAFEAVGEFTAGRMSQEDFDGIERNACPSSGSCGGMYTANTMSSSFEALGLALPYSSTMANPDDEKVGSAAESARVLIEAIKKDLKPRDIVTRKAIENAVAVIMATGGSTNAVLHFLAIAHAAEIDWTIDDFERMRKKVPVICDLKPSGKYVATDLHKAGGIPQVMKVLLDAGLLHGDCMTITGQTVAEALAHIPSVPSADQDVIHTIDKALYAQGHLAILKGNLSPEGCVAKITGLKNPVITGPARVFDDEYSAMDAIMANQIKAGDVLVMRYLGPKGGPGMPEMLAPTSALVGQGLGESVGLITDGRFSGGTWGMVVGHVSPEAFVGGTIGLVEEGDSVTIDARQLLIQLNVSEEEIARRRANWKQPAPRYTRGVLAKYAALASTASKGAVTG</sequence>
<keyword id="KW-0001">2Fe-2S</keyword>
<keyword id="KW-0028">Amino-acid biosynthesis</keyword>
<keyword id="KW-0100">Branched-chain amino acid biosynthesis</keyword>
<keyword id="KW-0408">Iron</keyword>
<keyword id="KW-0411">Iron-sulfur</keyword>
<keyword id="KW-0456">Lyase</keyword>
<keyword id="KW-0460">Magnesium</keyword>
<keyword id="KW-0479">Metal-binding</keyword>
<keyword id="KW-1185">Reference proteome</keyword>
<dbReference type="EC" id="4.2.1.9" evidence="1"/>
<dbReference type="EMBL" id="CU207211">
    <property type="protein sequence ID" value="CAL60928.1"/>
    <property type="molecule type" value="Genomic_DNA"/>
</dbReference>
<dbReference type="SMR" id="A4G341"/>
<dbReference type="STRING" id="204773.HEAR0734"/>
<dbReference type="KEGG" id="har:HEAR0734"/>
<dbReference type="eggNOG" id="COG0129">
    <property type="taxonomic scope" value="Bacteria"/>
</dbReference>
<dbReference type="HOGENOM" id="CLU_014271_4_2_4"/>
<dbReference type="OrthoDB" id="9807077at2"/>
<dbReference type="UniPathway" id="UPA00047">
    <property type="reaction ID" value="UER00057"/>
</dbReference>
<dbReference type="UniPathway" id="UPA00049">
    <property type="reaction ID" value="UER00061"/>
</dbReference>
<dbReference type="Proteomes" id="UP000006697">
    <property type="component" value="Chromosome"/>
</dbReference>
<dbReference type="GO" id="GO:0051537">
    <property type="term" value="F:2 iron, 2 sulfur cluster binding"/>
    <property type="evidence" value="ECO:0007669"/>
    <property type="project" value="UniProtKB-UniRule"/>
</dbReference>
<dbReference type="GO" id="GO:0004160">
    <property type="term" value="F:dihydroxy-acid dehydratase activity"/>
    <property type="evidence" value="ECO:0007669"/>
    <property type="project" value="UniProtKB-UniRule"/>
</dbReference>
<dbReference type="GO" id="GO:0000287">
    <property type="term" value="F:magnesium ion binding"/>
    <property type="evidence" value="ECO:0007669"/>
    <property type="project" value="UniProtKB-UniRule"/>
</dbReference>
<dbReference type="GO" id="GO:0009097">
    <property type="term" value="P:isoleucine biosynthetic process"/>
    <property type="evidence" value="ECO:0007669"/>
    <property type="project" value="UniProtKB-UniRule"/>
</dbReference>
<dbReference type="GO" id="GO:0009099">
    <property type="term" value="P:L-valine biosynthetic process"/>
    <property type="evidence" value="ECO:0007669"/>
    <property type="project" value="UniProtKB-UniRule"/>
</dbReference>
<dbReference type="FunFam" id="3.50.30.80:FF:000001">
    <property type="entry name" value="Dihydroxy-acid dehydratase"/>
    <property type="match status" value="1"/>
</dbReference>
<dbReference type="Gene3D" id="3.50.30.80">
    <property type="entry name" value="IlvD/EDD C-terminal domain-like"/>
    <property type="match status" value="1"/>
</dbReference>
<dbReference type="HAMAP" id="MF_00012">
    <property type="entry name" value="IlvD"/>
    <property type="match status" value="1"/>
</dbReference>
<dbReference type="InterPro" id="IPR050165">
    <property type="entry name" value="DHAD_IlvD/Edd"/>
</dbReference>
<dbReference type="InterPro" id="IPR042096">
    <property type="entry name" value="Dihydro-acid_dehy_C"/>
</dbReference>
<dbReference type="InterPro" id="IPR004404">
    <property type="entry name" value="DihydroxyA_deHydtase"/>
</dbReference>
<dbReference type="InterPro" id="IPR020558">
    <property type="entry name" value="DiOHA_6PGluconate_deHydtase_CS"/>
</dbReference>
<dbReference type="InterPro" id="IPR056740">
    <property type="entry name" value="ILV_EDD_C"/>
</dbReference>
<dbReference type="InterPro" id="IPR000581">
    <property type="entry name" value="ILV_EDD_N"/>
</dbReference>
<dbReference type="InterPro" id="IPR037237">
    <property type="entry name" value="IlvD/EDD_N"/>
</dbReference>
<dbReference type="NCBIfam" id="TIGR00110">
    <property type="entry name" value="ilvD"/>
    <property type="match status" value="1"/>
</dbReference>
<dbReference type="NCBIfam" id="NF002068">
    <property type="entry name" value="PRK00911.1"/>
    <property type="match status" value="1"/>
</dbReference>
<dbReference type="PANTHER" id="PTHR21000">
    <property type="entry name" value="DIHYDROXY-ACID DEHYDRATASE DAD"/>
    <property type="match status" value="1"/>
</dbReference>
<dbReference type="PANTHER" id="PTHR21000:SF5">
    <property type="entry name" value="DIHYDROXY-ACID DEHYDRATASE, MITOCHONDRIAL"/>
    <property type="match status" value="1"/>
</dbReference>
<dbReference type="Pfam" id="PF24877">
    <property type="entry name" value="ILV_EDD_C"/>
    <property type="match status" value="1"/>
</dbReference>
<dbReference type="Pfam" id="PF00920">
    <property type="entry name" value="ILVD_EDD_N"/>
    <property type="match status" value="1"/>
</dbReference>
<dbReference type="SUPFAM" id="SSF143975">
    <property type="entry name" value="IlvD/EDD N-terminal domain-like"/>
    <property type="match status" value="1"/>
</dbReference>
<dbReference type="SUPFAM" id="SSF52016">
    <property type="entry name" value="LeuD/IlvD-like"/>
    <property type="match status" value="1"/>
</dbReference>
<dbReference type="PROSITE" id="PS00886">
    <property type="entry name" value="ILVD_EDD_1"/>
    <property type="match status" value="1"/>
</dbReference>
<dbReference type="PROSITE" id="PS00887">
    <property type="entry name" value="ILVD_EDD_2"/>
    <property type="match status" value="1"/>
</dbReference>
<accession>A4G341</accession>
<protein>
    <recommendedName>
        <fullName evidence="1">Dihydroxy-acid dehydratase</fullName>
        <shortName evidence="1">DAD</shortName>
        <ecNumber evidence="1">4.2.1.9</ecNumber>
    </recommendedName>
</protein>
<evidence type="ECO:0000255" key="1">
    <source>
        <dbReference type="HAMAP-Rule" id="MF_00012"/>
    </source>
</evidence>
<reference key="1">
    <citation type="journal article" date="2007" name="PLoS Genet.">
        <title>A tale of two oxidation states: bacterial colonization of arsenic-rich environments.</title>
        <authorList>
            <person name="Muller D."/>
            <person name="Medigue C."/>
            <person name="Koechler S."/>
            <person name="Barbe V."/>
            <person name="Barakat M."/>
            <person name="Talla E."/>
            <person name="Bonnefoy V."/>
            <person name="Krin E."/>
            <person name="Arsene-Ploetze F."/>
            <person name="Carapito C."/>
            <person name="Chandler M."/>
            <person name="Cournoyer B."/>
            <person name="Cruveiller S."/>
            <person name="Dossat C."/>
            <person name="Duval S."/>
            <person name="Heymann M."/>
            <person name="Leize E."/>
            <person name="Lieutaud A."/>
            <person name="Lievremont D."/>
            <person name="Makita Y."/>
            <person name="Mangenot S."/>
            <person name="Nitschke W."/>
            <person name="Ortet P."/>
            <person name="Perdrial N."/>
            <person name="Schoepp B."/>
            <person name="Siguier P."/>
            <person name="Simeonova D.D."/>
            <person name="Rouy Z."/>
            <person name="Segurens B."/>
            <person name="Turlin E."/>
            <person name="Vallenet D."/>
            <person name="van Dorsselaer A."/>
            <person name="Weiss S."/>
            <person name="Weissenbach J."/>
            <person name="Lett M.-C."/>
            <person name="Danchin A."/>
            <person name="Bertin P.N."/>
        </authorList>
    </citation>
    <scope>NUCLEOTIDE SEQUENCE [LARGE SCALE GENOMIC DNA]</scope>
    <source>
        <strain>ULPAs1</strain>
    </source>
</reference>
<feature type="chain" id="PRO_1000000992" description="Dihydroxy-acid dehydratase">
    <location>
        <begin position="1"/>
        <end position="557"/>
    </location>
</feature>
<feature type="active site" description="Proton acceptor" evidence="1">
    <location>
        <position position="473"/>
    </location>
</feature>
<feature type="binding site" evidence="1">
    <location>
        <position position="50"/>
    </location>
    <ligand>
        <name>[2Fe-2S] cluster</name>
        <dbReference type="ChEBI" id="CHEBI:190135"/>
    </ligand>
</feature>
<feature type="binding site" evidence="1">
    <location>
        <position position="82"/>
    </location>
    <ligand>
        <name>Mg(2+)</name>
        <dbReference type="ChEBI" id="CHEBI:18420"/>
    </ligand>
</feature>
<feature type="binding site" evidence="1">
    <location>
        <position position="123"/>
    </location>
    <ligand>
        <name>[2Fe-2S] cluster</name>
        <dbReference type="ChEBI" id="CHEBI:190135"/>
    </ligand>
</feature>
<feature type="binding site" evidence="1">
    <location>
        <position position="124"/>
    </location>
    <ligand>
        <name>Mg(2+)</name>
        <dbReference type="ChEBI" id="CHEBI:18420"/>
    </ligand>
</feature>
<feature type="binding site" description="via carbamate group" evidence="1">
    <location>
        <position position="125"/>
    </location>
    <ligand>
        <name>Mg(2+)</name>
        <dbReference type="ChEBI" id="CHEBI:18420"/>
    </ligand>
</feature>
<feature type="binding site" evidence="1">
    <location>
        <position position="195"/>
    </location>
    <ligand>
        <name>[2Fe-2S] cluster</name>
        <dbReference type="ChEBI" id="CHEBI:190135"/>
    </ligand>
</feature>
<feature type="binding site" evidence="1">
    <location>
        <position position="447"/>
    </location>
    <ligand>
        <name>Mg(2+)</name>
        <dbReference type="ChEBI" id="CHEBI:18420"/>
    </ligand>
</feature>
<feature type="modified residue" description="N6-carboxylysine" evidence="1">
    <location>
        <position position="125"/>
    </location>
</feature>
<name>ILVD_HERAR</name>
<comment type="function">
    <text evidence="1">Functions in the biosynthesis of branched-chain amino acids. Catalyzes the dehydration of (2R,3R)-2,3-dihydroxy-3-methylpentanoate (2,3-dihydroxy-3-methylvalerate) into 2-oxo-3-methylpentanoate (2-oxo-3-methylvalerate) and of (2R)-2,3-dihydroxy-3-methylbutanoate (2,3-dihydroxyisovalerate) into 2-oxo-3-methylbutanoate (2-oxoisovalerate), the penultimate precursor to L-isoleucine and L-valine, respectively.</text>
</comment>
<comment type="catalytic activity">
    <reaction evidence="1">
        <text>(2R)-2,3-dihydroxy-3-methylbutanoate = 3-methyl-2-oxobutanoate + H2O</text>
        <dbReference type="Rhea" id="RHEA:24809"/>
        <dbReference type="ChEBI" id="CHEBI:11851"/>
        <dbReference type="ChEBI" id="CHEBI:15377"/>
        <dbReference type="ChEBI" id="CHEBI:49072"/>
        <dbReference type="EC" id="4.2.1.9"/>
    </reaction>
    <physiologicalReaction direction="left-to-right" evidence="1">
        <dbReference type="Rhea" id="RHEA:24810"/>
    </physiologicalReaction>
</comment>
<comment type="catalytic activity">
    <reaction evidence="1">
        <text>(2R,3R)-2,3-dihydroxy-3-methylpentanoate = (S)-3-methyl-2-oxopentanoate + H2O</text>
        <dbReference type="Rhea" id="RHEA:27694"/>
        <dbReference type="ChEBI" id="CHEBI:15377"/>
        <dbReference type="ChEBI" id="CHEBI:35146"/>
        <dbReference type="ChEBI" id="CHEBI:49258"/>
        <dbReference type="EC" id="4.2.1.9"/>
    </reaction>
    <physiologicalReaction direction="left-to-right" evidence="1">
        <dbReference type="Rhea" id="RHEA:27695"/>
    </physiologicalReaction>
</comment>
<comment type="cofactor">
    <cofactor evidence="1">
        <name>[2Fe-2S] cluster</name>
        <dbReference type="ChEBI" id="CHEBI:190135"/>
    </cofactor>
    <text evidence="1">Binds 1 [2Fe-2S] cluster per subunit. This cluster acts as a Lewis acid cofactor.</text>
</comment>
<comment type="cofactor">
    <cofactor evidence="1">
        <name>Mg(2+)</name>
        <dbReference type="ChEBI" id="CHEBI:18420"/>
    </cofactor>
</comment>
<comment type="pathway">
    <text evidence="1">Amino-acid biosynthesis; L-isoleucine biosynthesis; L-isoleucine from 2-oxobutanoate: step 3/4.</text>
</comment>
<comment type="pathway">
    <text evidence="1">Amino-acid biosynthesis; L-valine biosynthesis; L-valine from pyruvate: step 3/4.</text>
</comment>
<comment type="subunit">
    <text evidence="1">Homodimer.</text>
</comment>
<comment type="similarity">
    <text evidence="1">Belongs to the IlvD/Edd family.</text>
</comment>
<proteinExistence type="inferred from homology"/>